<gene>
    <name type="primary">hbhA</name>
    <name type="ordered locus">MT0493</name>
</gene>
<comment type="function">
    <text evidence="1">Required for extrapulmonary dissemination. Mediates adherence to epithelial cells by binding to sulfated glycoconjugates present at the surface of these cells (By similarity).</text>
</comment>
<comment type="subcellular location">
    <subcellularLocation>
        <location evidence="1">Cell surface</location>
    </subcellularLocation>
</comment>
<comment type="PTM">
    <text evidence="1">Glycosylated. Glycosylation may protect the protein from proteolytic degradation and be important for hemagglutination. It suggests that the carbohydrate moiety may be located within the C-terminal domain of HbhA (By similarity).</text>
</comment>
<comment type="similarity">
    <text evidence="3">To M.leprae HbhA.</text>
</comment>
<comment type="sequence caution" evidence="3">
    <conflict type="erroneous initiation">
        <sequence resource="EMBL-CDS" id="AAK44716"/>
    </conflict>
</comment>
<sequence length="199" mass="21534">MAENSNIDDIKAPLLAALGAADLALATVNELITNLRERAEETRTDTRSRVEESRARLTKLQEDLPEQLTELREKFTAEELRKAAEGYLEAATSRYNELVERGEAALERLRSQQSFEEVSARAEGYVDQAVELTQEALGTVASQTRAVGERAAKLVGIELPKKAAPAKKAAPAKKAAPAKKAAAKKAPAKKAAAKKVTQK</sequence>
<proteinExistence type="inferred from homology"/>
<dbReference type="EMBL" id="AE000516">
    <property type="protein sequence ID" value="AAK44716.1"/>
    <property type="status" value="ALT_INIT"/>
    <property type="molecule type" value="Genomic_DNA"/>
</dbReference>
<dbReference type="PIR" id="F70742">
    <property type="entry name" value="F70742"/>
</dbReference>
<dbReference type="RefSeq" id="WP_003402339.1">
    <property type="nucleotide sequence ID" value="NZ_KK341227.1"/>
</dbReference>
<dbReference type="SMR" id="P9WIP8"/>
<dbReference type="GeneID" id="45424436"/>
<dbReference type="KEGG" id="mtc:MT0493"/>
<dbReference type="PATRIC" id="fig|83331.31.peg.522"/>
<dbReference type="HOGENOM" id="CLU_089817_1_0_11"/>
<dbReference type="Proteomes" id="UP000001020">
    <property type="component" value="Chromosome"/>
</dbReference>
<dbReference type="GO" id="GO:0009986">
    <property type="term" value="C:cell surface"/>
    <property type="evidence" value="ECO:0007669"/>
    <property type="project" value="UniProtKB-SubCell"/>
</dbReference>
<dbReference type="GO" id="GO:0008201">
    <property type="term" value="F:heparin binding"/>
    <property type="evidence" value="ECO:0007669"/>
    <property type="project" value="UniProtKB-KW"/>
</dbReference>
<dbReference type="GO" id="GO:0007155">
    <property type="term" value="P:cell adhesion"/>
    <property type="evidence" value="ECO:0007669"/>
    <property type="project" value="UniProtKB-KW"/>
</dbReference>
<dbReference type="Gene3D" id="1.20.5.1230">
    <property type="entry name" value="Apolipoprotein A-I"/>
    <property type="match status" value="1"/>
</dbReference>
<dbReference type="SUPFAM" id="SSF58113">
    <property type="entry name" value="Apolipoprotein A-I"/>
    <property type="match status" value="1"/>
</dbReference>
<organism>
    <name type="scientific">Mycobacterium tuberculosis (strain CDC 1551 / Oshkosh)</name>
    <dbReference type="NCBI Taxonomy" id="83331"/>
    <lineage>
        <taxon>Bacteria</taxon>
        <taxon>Bacillati</taxon>
        <taxon>Actinomycetota</taxon>
        <taxon>Actinomycetes</taxon>
        <taxon>Mycobacteriales</taxon>
        <taxon>Mycobacteriaceae</taxon>
        <taxon>Mycobacterium</taxon>
        <taxon>Mycobacterium tuberculosis complex</taxon>
    </lineage>
</organism>
<feature type="initiator methionine" description="Removed" evidence="1">
    <location>
        <position position="1"/>
    </location>
</feature>
<feature type="chain" id="PRO_0000427967" description="Heparin-binding hemagglutinin">
    <location>
        <begin position="2"/>
        <end position="199"/>
    </location>
</feature>
<feature type="region of interest" description="Disordered" evidence="2">
    <location>
        <begin position="162"/>
        <end position="199"/>
    </location>
</feature>
<feature type="compositionally biased region" description="Low complexity" evidence="2">
    <location>
        <begin position="162"/>
        <end position="180"/>
    </location>
</feature>
<feature type="compositionally biased region" description="Basic residues" evidence="2">
    <location>
        <begin position="181"/>
        <end position="199"/>
    </location>
</feature>
<evidence type="ECO:0000250" key="1"/>
<evidence type="ECO:0000256" key="2">
    <source>
        <dbReference type="SAM" id="MobiDB-lite"/>
    </source>
</evidence>
<evidence type="ECO:0000305" key="3"/>
<accession>P9WIP8</accession>
<accession>L0T5H0</accession>
<accession>O85733</accession>
<accession>P0A5P6</accession>
<accession>Q11142</accession>
<name>HBHA_MYCTO</name>
<reference key="1">
    <citation type="journal article" date="2002" name="J. Bacteriol.">
        <title>Whole-genome comparison of Mycobacterium tuberculosis clinical and laboratory strains.</title>
        <authorList>
            <person name="Fleischmann R.D."/>
            <person name="Alland D."/>
            <person name="Eisen J.A."/>
            <person name="Carpenter L."/>
            <person name="White O."/>
            <person name="Peterson J.D."/>
            <person name="DeBoy R.T."/>
            <person name="Dodson R.J."/>
            <person name="Gwinn M.L."/>
            <person name="Haft D.H."/>
            <person name="Hickey E.K."/>
            <person name="Kolonay J.F."/>
            <person name="Nelson W.C."/>
            <person name="Umayam L.A."/>
            <person name="Ermolaeva M.D."/>
            <person name="Salzberg S.L."/>
            <person name="Delcher A."/>
            <person name="Utterback T.R."/>
            <person name="Weidman J.F."/>
            <person name="Khouri H.M."/>
            <person name="Gill J."/>
            <person name="Mikula A."/>
            <person name="Bishai W."/>
            <person name="Jacobs W.R. Jr."/>
            <person name="Venter J.C."/>
            <person name="Fraser C.M."/>
        </authorList>
    </citation>
    <scope>NUCLEOTIDE SEQUENCE [LARGE SCALE GENOMIC DNA]</scope>
    <source>
        <strain>CDC 1551 / Oshkosh</strain>
    </source>
</reference>
<protein>
    <recommendedName>
        <fullName>Heparin-binding hemagglutinin</fullName>
    </recommendedName>
    <alternativeName>
        <fullName>Adhesin</fullName>
    </alternativeName>
</protein>
<keyword id="KW-0130">Cell adhesion</keyword>
<keyword id="KW-0325">Glycoprotein</keyword>
<keyword id="KW-0348">Hemagglutinin</keyword>
<keyword id="KW-0358">Heparin-binding</keyword>
<keyword id="KW-1185">Reference proteome</keyword>
<keyword id="KW-0843">Virulence</keyword>